<proteinExistence type="inferred from homology"/>
<name>PYRI_YERPN</name>
<comment type="function">
    <text evidence="1">Involved in allosteric regulation of aspartate carbamoyltransferase.</text>
</comment>
<comment type="cofactor">
    <cofactor evidence="1">
        <name>Zn(2+)</name>
        <dbReference type="ChEBI" id="CHEBI:29105"/>
    </cofactor>
    <text evidence="1">Binds 1 zinc ion per subunit.</text>
</comment>
<comment type="subunit">
    <text evidence="1">Contains catalytic and regulatory chains.</text>
</comment>
<comment type="similarity">
    <text evidence="1">Belongs to the PyrI family.</text>
</comment>
<comment type="sequence caution" evidence="2">
    <conflict type="erroneous initiation">
        <sequence resource="EMBL-CDS" id="EEO74348"/>
    </conflict>
</comment>
<accession>Q1CDY2</accession>
<accession>D1Q1E5</accession>
<dbReference type="EMBL" id="CP000305">
    <property type="protein sequence ID" value="ABG19798.1"/>
    <property type="molecule type" value="Genomic_DNA"/>
</dbReference>
<dbReference type="EMBL" id="ACNQ01000019">
    <property type="protein sequence ID" value="EEO74348.1"/>
    <property type="status" value="ALT_INIT"/>
    <property type="molecule type" value="Genomic_DNA"/>
</dbReference>
<dbReference type="SMR" id="Q1CDY2"/>
<dbReference type="KEGG" id="ypn:YPN_3471"/>
<dbReference type="HOGENOM" id="CLU_128576_0_0_6"/>
<dbReference type="Proteomes" id="UP000008936">
    <property type="component" value="Chromosome"/>
</dbReference>
<dbReference type="GO" id="GO:0009347">
    <property type="term" value="C:aspartate carbamoyltransferase complex"/>
    <property type="evidence" value="ECO:0007669"/>
    <property type="project" value="InterPro"/>
</dbReference>
<dbReference type="GO" id="GO:0046872">
    <property type="term" value="F:metal ion binding"/>
    <property type="evidence" value="ECO:0007669"/>
    <property type="project" value="UniProtKB-KW"/>
</dbReference>
<dbReference type="GO" id="GO:0006207">
    <property type="term" value="P:'de novo' pyrimidine nucleobase biosynthetic process"/>
    <property type="evidence" value="ECO:0007669"/>
    <property type="project" value="InterPro"/>
</dbReference>
<dbReference type="GO" id="GO:0006221">
    <property type="term" value="P:pyrimidine nucleotide biosynthetic process"/>
    <property type="evidence" value="ECO:0007669"/>
    <property type="project" value="UniProtKB-UniRule"/>
</dbReference>
<dbReference type="FunFam" id="3.30.70.140:FF:000001">
    <property type="entry name" value="Aspartate carbamoyltransferase regulatory chain"/>
    <property type="match status" value="1"/>
</dbReference>
<dbReference type="Gene3D" id="2.30.30.20">
    <property type="entry name" value="Aspartate carbamoyltransferase regulatory subunit, C-terminal domain"/>
    <property type="match status" value="1"/>
</dbReference>
<dbReference type="Gene3D" id="3.30.70.140">
    <property type="entry name" value="Aspartate carbamoyltransferase regulatory subunit, N-terminal domain"/>
    <property type="match status" value="1"/>
</dbReference>
<dbReference type="HAMAP" id="MF_00002">
    <property type="entry name" value="Asp_carb_tr_reg"/>
    <property type="match status" value="1"/>
</dbReference>
<dbReference type="InterPro" id="IPR020545">
    <property type="entry name" value="Asp_carbamoyltransf_reg_N"/>
</dbReference>
<dbReference type="InterPro" id="IPR002801">
    <property type="entry name" value="Asp_carbamoylTrfase_reg"/>
</dbReference>
<dbReference type="InterPro" id="IPR020542">
    <property type="entry name" value="Asp_carbamoyltrfase_reg_C"/>
</dbReference>
<dbReference type="InterPro" id="IPR036792">
    <property type="entry name" value="Asp_carbatrfase_reg_C_sf"/>
</dbReference>
<dbReference type="InterPro" id="IPR036793">
    <property type="entry name" value="Asp_carbatrfase_reg_N_sf"/>
</dbReference>
<dbReference type="NCBIfam" id="TIGR00240">
    <property type="entry name" value="ATCase_reg"/>
    <property type="match status" value="1"/>
</dbReference>
<dbReference type="PANTHER" id="PTHR35805">
    <property type="entry name" value="ASPARTATE CARBAMOYLTRANSFERASE REGULATORY CHAIN"/>
    <property type="match status" value="1"/>
</dbReference>
<dbReference type="PANTHER" id="PTHR35805:SF1">
    <property type="entry name" value="ASPARTATE CARBAMOYLTRANSFERASE REGULATORY CHAIN"/>
    <property type="match status" value="1"/>
</dbReference>
<dbReference type="Pfam" id="PF01948">
    <property type="entry name" value="PyrI"/>
    <property type="match status" value="1"/>
</dbReference>
<dbReference type="Pfam" id="PF02748">
    <property type="entry name" value="PyrI_C"/>
    <property type="match status" value="1"/>
</dbReference>
<dbReference type="SUPFAM" id="SSF57825">
    <property type="entry name" value="Aspartate carbamoyltransferase, Regulatory-chain, C-terminal domain"/>
    <property type="match status" value="1"/>
</dbReference>
<dbReference type="SUPFAM" id="SSF54893">
    <property type="entry name" value="Aspartate carbamoyltransferase, Regulatory-chain, N-terminal domain"/>
    <property type="match status" value="1"/>
</dbReference>
<reference key="1">
    <citation type="journal article" date="2006" name="J. Bacteriol.">
        <title>Complete genome sequence of Yersinia pestis strains Antiqua and Nepal516: evidence of gene reduction in an emerging pathogen.</title>
        <authorList>
            <person name="Chain P.S.G."/>
            <person name="Hu P."/>
            <person name="Malfatti S.A."/>
            <person name="Radnedge L."/>
            <person name="Larimer F."/>
            <person name="Vergez L.M."/>
            <person name="Worsham P."/>
            <person name="Chu M.C."/>
            <person name="Andersen G.L."/>
        </authorList>
    </citation>
    <scope>NUCLEOTIDE SEQUENCE [LARGE SCALE GENOMIC DNA]</scope>
    <source>
        <strain>Nepal516</strain>
    </source>
</reference>
<reference key="2">
    <citation type="submission" date="2009-04" db="EMBL/GenBank/DDBJ databases">
        <title>Yersinia pestis Nepal516A whole genome shotgun sequencing project.</title>
        <authorList>
            <person name="Plunkett G. III"/>
            <person name="Anderson B.D."/>
            <person name="Baumler D.J."/>
            <person name="Burland V."/>
            <person name="Cabot E.L."/>
            <person name="Glasner J.D."/>
            <person name="Mau B."/>
            <person name="Neeno-Eckwall E."/>
            <person name="Perna N.T."/>
            <person name="Munk A.C."/>
            <person name="Tapia R."/>
            <person name="Green L.D."/>
            <person name="Rogers Y.C."/>
            <person name="Detter J.C."/>
            <person name="Bruce D.C."/>
            <person name="Brettin T.S."/>
        </authorList>
    </citation>
    <scope>NUCLEOTIDE SEQUENCE [LARGE SCALE GENOMIC DNA]</scope>
    <source>
        <strain>Nepal516</strain>
    </source>
</reference>
<keyword id="KW-0479">Metal-binding</keyword>
<keyword id="KW-0665">Pyrimidine biosynthesis</keyword>
<keyword id="KW-0862">Zinc</keyword>
<evidence type="ECO:0000255" key="1">
    <source>
        <dbReference type="HAMAP-Rule" id="MF_00002"/>
    </source>
</evidence>
<evidence type="ECO:0000305" key="2"/>
<sequence>MMTQDYKLQVEAIKCGTVIDHIPAQIGFKLLSLFKLTATDQRITIGLNLPSKRSGRKDLIKIENTFLTEQQANQLAMYAPDATVNRIDNYEVVKKLTLSLPERIDAVLTCPNSNCISHNEPVDSSFTVKAQRGEISLKCKYCEKEFDHLTVLHAD</sequence>
<protein>
    <recommendedName>
        <fullName evidence="1">Aspartate carbamoyltransferase regulatory chain</fullName>
    </recommendedName>
</protein>
<feature type="chain" id="PRO_1000000058" description="Aspartate carbamoyltransferase regulatory chain">
    <location>
        <begin position="1"/>
        <end position="155"/>
    </location>
</feature>
<feature type="binding site" evidence="1">
    <location>
        <position position="110"/>
    </location>
    <ligand>
        <name>Zn(2+)</name>
        <dbReference type="ChEBI" id="CHEBI:29105"/>
    </ligand>
</feature>
<feature type="binding site" evidence="1">
    <location>
        <position position="115"/>
    </location>
    <ligand>
        <name>Zn(2+)</name>
        <dbReference type="ChEBI" id="CHEBI:29105"/>
    </ligand>
</feature>
<feature type="binding site" evidence="1">
    <location>
        <position position="139"/>
    </location>
    <ligand>
        <name>Zn(2+)</name>
        <dbReference type="ChEBI" id="CHEBI:29105"/>
    </ligand>
</feature>
<feature type="binding site" evidence="1">
    <location>
        <position position="142"/>
    </location>
    <ligand>
        <name>Zn(2+)</name>
        <dbReference type="ChEBI" id="CHEBI:29105"/>
    </ligand>
</feature>
<organism>
    <name type="scientific">Yersinia pestis bv. Antiqua (strain Nepal516)</name>
    <dbReference type="NCBI Taxonomy" id="377628"/>
    <lineage>
        <taxon>Bacteria</taxon>
        <taxon>Pseudomonadati</taxon>
        <taxon>Pseudomonadota</taxon>
        <taxon>Gammaproteobacteria</taxon>
        <taxon>Enterobacterales</taxon>
        <taxon>Yersiniaceae</taxon>
        <taxon>Yersinia</taxon>
    </lineage>
</organism>
<gene>
    <name evidence="1" type="primary">pyrI</name>
    <name type="ordered locus">YPN_3471</name>
    <name type="ORF">YP516_3944</name>
</gene>